<sequence length="362" mass="37737">MQTPTLGQLATENGAQVVGDPDLAIIGLAPLDQAGSGELSFLSNPLYLAQALSSAAGAVIVSAADLERIRAEGQADGRNWLVARNPYVCFARIAQRFDKANQDARTGIDPRASVAADVTVPASCFIGPNVVIESGARIGERVRIVANSFVGAHAEIGDDSLLYANVSVYHHCVVGARAILHSGVVIGADGFGFAPDIGPTGVEYVKIPQTGRAVLGNDVEVGANTAIDRGAMADTVIEDGCKIDNQVQIAHNVRVGAHTVIAGCAAVSGSTHIGRFCVIGGAANFSGHLKIADRTTVSGGTSITKSITKPGGHFTSVFPFLPHGEWERNAAIVRGLTKLRERVMQLERRLRGQSAGTQTSQD</sequence>
<proteinExistence type="inferred from homology"/>
<reference key="1">
    <citation type="journal article" date="2010" name="PLoS ONE">
        <title>The complete multipartite genome sequence of Cupriavidus necator JMP134, a versatile pollutant degrader.</title>
        <authorList>
            <person name="Lykidis A."/>
            <person name="Perez-Pantoja D."/>
            <person name="Ledger T."/>
            <person name="Mavromatis K."/>
            <person name="Anderson I.J."/>
            <person name="Ivanova N.N."/>
            <person name="Hooper S.D."/>
            <person name="Lapidus A."/>
            <person name="Lucas S."/>
            <person name="Gonzalez B."/>
            <person name="Kyrpides N.C."/>
        </authorList>
    </citation>
    <scope>NUCLEOTIDE SEQUENCE [LARGE SCALE GENOMIC DNA]</scope>
    <source>
        <strain>JMP134 / LMG 1197</strain>
    </source>
</reference>
<accession>Q470E7</accession>
<organism>
    <name type="scientific">Cupriavidus pinatubonensis (strain JMP 134 / LMG 1197)</name>
    <name type="common">Cupriavidus necator (strain JMP 134)</name>
    <dbReference type="NCBI Taxonomy" id="264198"/>
    <lineage>
        <taxon>Bacteria</taxon>
        <taxon>Pseudomonadati</taxon>
        <taxon>Pseudomonadota</taxon>
        <taxon>Betaproteobacteria</taxon>
        <taxon>Burkholderiales</taxon>
        <taxon>Burkholderiaceae</taxon>
        <taxon>Cupriavidus</taxon>
    </lineage>
</organism>
<comment type="function">
    <text evidence="1">Catalyzes the N-acylation of UDP-3-O-acylglucosamine using 3-hydroxyacyl-ACP as the acyl donor. Is involved in the biosynthesis of lipid A, a phosphorylated glycolipid that anchors the lipopolysaccharide to the outer membrane of the cell.</text>
</comment>
<comment type="catalytic activity">
    <reaction evidence="1">
        <text>a UDP-3-O-[(3R)-3-hydroxyacyl]-alpha-D-glucosamine + a (3R)-hydroxyacyl-[ACP] = a UDP-2-N,3-O-bis[(3R)-3-hydroxyacyl]-alpha-D-glucosamine + holo-[ACP] + H(+)</text>
        <dbReference type="Rhea" id="RHEA:53836"/>
        <dbReference type="Rhea" id="RHEA-COMP:9685"/>
        <dbReference type="Rhea" id="RHEA-COMP:9945"/>
        <dbReference type="ChEBI" id="CHEBI:15378"/>
        <dbReference type="ChEBI" id="CHEBI:64479"/>
        <dbReference type="ChEBI" id="CHEBI:78827"/>
        <dbReference type="ChEBI" id="CHEBI:137740"/>
        <dbReference type="ChEBI" id="CHEBI:137748"/>
        <dbReference type="EC" id="2.3.1.191"/>
    </reaction>
</comment>
<comment type="pathway">
    <text evidence="1">Bacterial outer membrane biogenesis; LPS lipid A biosynthesis.</text>
</comment>
<comment type="subunit">
    <text evidence="1">Homotrimer.</text>
</comment>
<comment type="similarity">
    <text evidence="1">Belongs to the transferase hexapeptide repeat family. LpxD subfamily.</text>
</comment>
<protein>
    <recommendedName>
        <fullName evidence="1">UDP-3-O-acylglucosamine N-acyltransferase</fullName>
        <ecNumber evidence="1">2.3.1.191</ecNumber>
    </recommendedName>
</protein>
<dbReference type="EC" id="2.3.1.191" evidence="1"/>
<dbReference type="EMBL" id="CP000090">
    <property type="protein sequence ID" value="AAZ61236.1"/>
    <property type="molecule type" value="Genomic_DNA"/>
</dbReference>
<dbReference type="SMR" id="Q470E7"/>
<dbReference type="STRING" id="264198.Reut_A1871"/>
<dbReference type="KEGG" id="reu:Reut_A1871"/>
<dbReference type="eggNOG" id="COG1044">
    <property type="taxonomic scope" value="Bacteria"/>
</dbReference>
<dbReference type="HOGENOM" id="CLU_049865_0_1_4"/>
<dbReference type="OrthoDB" id="9784739at2"/>
<dbReference type="UniPathway" id="UPA00973"/>
<dbReference type="GO" id="GO:0016020">
    <property type="term" value="C:membrane"/>
    <property type="evidence" value="ECO:0007669"/>
    <property type="project" value="GOC"/>
</dbReference>
<dbReference type="GO" id="GO:0016410">
    <property type="term" value="F:N-acyltransferase activity"/>
    <property type="evidence" value="ECO:0007669"/>
    <property type="project" value="InterPro"/>
</dbReference>
<dbReference type="GO" id="GO:0009245">
    <property type="term" value="P:lipid A biosynthetic process"/>
    <property type="evidence" value="ECO:0007669"/>
    <property type="project" value="UniProtKB-UniRule"/>
</dbReference>
<dbReference type="CDD" id="cd03352">
    <property type="entry name" value="LbH_LpxD"/>
    <property type="match status" value="1"/>
</dbReference>
<dbReference type="Gene3D" id="2.160.10.10">
    <property type="entry name" value="Hexapeptide repeat proteins"/>
    <property type="match status" value="1"/>
</dbReference>
<dbReference type="Gene3D" id="3.40.1390.10">
    <property type="entry name" value="MurE/MurF, N-terminal domain"/>
    <property type="match status" value="1"/>
</dbReference>
<dbReference type="HAMAP" id="MF_00523">
    <property type="entry name" value="LpxD"/>
    <property type="match status" value="1"/>
</dbReference>
<dbReference type="InterPro" id="IPR001451">
    <property type="entry name" value="Hexapep"/>
</dbReference>
<dbReference type="InterPro" id="IPR007691">
    <property type="entry name" value="LpxD"/>
</dbReference>
<dbReference type="InterPro" id="IPR011004">
    <property type="entry name" value="Trimer_LpxA-like_sf"/>
</dbReference>
<dbReference type="InterPro" id="IPR020573">
    <property type="entry name" value="UDP_GlcNAc_AcTrfase_non-rep"/>
</dbReference>
<dbReference type="NCBIfam" id="TIGR01853">
    <property type="entry name" value="lipid_A_lpxD"/>
    <property type="match status" value="1"/>
</dbReference>
<dbReference type="NCBIfam" id="NF002060">
    <property type="entry name" value="PRK00892.1"/>
    <property type="match status" value="1"/>
</dbReference>
<dbReference type="PANTHER" id="PTHR43378">
    <property type="entry name" value="UDP-3-O-ACYLGLUCOSAMINE N-ACYLTRANSFERASE"/>
    <property type="match status" value="1"/>
</dbReference>
<dbReference type="PANTHER" id="PTHR43378:SF2">
    <property type="entry name" value="UDP-3-O-ACYLGLUCOSAMINE N-ACYLTRANSFERASE 1, MITOCHONDRIAL-RELATED"/>
    <property type="match status" value="1"/>
</dbReference>
<dbReference type="Pfam" id="PF00132">
    <property type="entry name" value="Hexapep"/>
    <property type="match status" value="3"/>
</dbReference>
<dbReference type="Pfam" id="PF04613">
    <property type="entry name" value="LpxD"/>
    <property type="match status" value="1"/>
</dbReference>
<dbReference type="SUPFAM" id="SSF51161">
    <property type="entry name" value="Trimeric LpxA-like enzymes"/>
    <property type="match status" value="1"/>
</dbReference>
<dbReference type="PROSITE" id="PS00101">
    <property type="entry name" value="HEXAPEP_TRANSFERASES"/>
    <property type="match status" value="1"/>
</dbReference>
<feature type="chain" id="PRO_0000264419" description="UDP-3-O-acylglucosamine N-acyltransferase">
    <location>
        <begin position="1"/>
        <end position="362"/>
    </location>
</feature>
<feature type="active site" description="Proton acceptor" evidence="1">
    <location>
        <position position="251"/>
    </location>
</feature>
<name>LPXD_CUPPJ</name>
<evidence type="ECO:0000255" key="1">
    <source>
        <dbReference type="HAMAP-Rule" id="MF_00523"/>
    </source>
</evidence>
<keyword id="KW-0012">Acyltransferase</keyword>
<keyword id="KW-0441">Lipid A biosynthesis</keyword>
<keyword id="KW-0444">Lipid biosynthesis</keyword>
<keyword id="KW-0443">Lipid metabolism</keyword>
<keyword id="KW-0677">Repeat</keyword>
<keyword id="KW-0808">Transferase</keyword>
<gene>
    <name evidence="1" type="primary">lpxD</name>
    <name type="ordered locus">Reut_A1871</name>
</gene>